<accession>Q59418</accession>
<accession>Q6D4G4</accession>
<organism>
    <name type="scientific">Pectobacterium atrosepticum (strain SCRI 1043 / ATCC BAA-672)</name>
    <name type="common">Erwinia carotovora subsp. atroseptica</name>
    <dbReference type="NCBI Taxonomy" id="218491"/>
    <lineage>
        <taxon>Bacteria</taxon>
        <taxon>Pseudomonadati</taxon>
        <taxon>Pseudomonadota</taxon>
        <taxon>Gammaproteobacteria</taxon>
        <taxon>Enterobacterales</taxon>
        <taxon>Pectobacteriaceae</taxon>
        <taxon>Pectobacterium</taxon>
    </lineage>
</organism>
<evidence type="ECO:0000305" key="1"/>
<sequence length="388" mass="44457">MAKGNKIPLTFHTYQDAATGTEVVRLTPPDVICHRNYFYQKCFFNDGSKLLFGAAFDGPWNYYLLDLKEQNATQLTEGKGDNTFGGFLSPNDDALYYVKNTRNLMRVDLTTLEEKTIYQVPDDWVGYGTWVANSDCTKMVGIEIKKEDWKPLTDWKKFQEFYFTNPCCRLIRVDLVTGEAETILQENQWLGHPIYRPGDDNTVAFCHEGPHDLVDARMWFINEDGTNMRKVKEHAEGESCTHEFWVPDGSAMIYVSYLKDDTNRYIRSIDPVTLEDRQLRVMPPCSHLMSNYDGTLLVGDGSDAPVDVQDDGGYKIENDPFLYVFNLKTGKEHRIAQHNTSWEVLEGDRQVTHPHPSFTPDNKQVLFTSDVDGKPALYLAKVPDSVWN</sequence>
<dbReference type="EC" id="4.2.2.6"/>
<dbReference type="EMBL" id="X77391">
    <property type="protein sequence ID" value="CAA54566.1"/>
    <property type="molecule type" value="Genomic_DNA"/>
</dbReference>
<dbReference type="EMBL" id="BX950851">
    <property type="protein sequence ID" value="CAG75329.1"/>
    <property type="molecule type" value="Genomic_DNA"/>
</dbReference>
<dbReference type="PIR" id="S41940">
    <property type="entry name" value="S41940"/>
</dbReference>
<dbReference type="RefSeq" id="WP_011093978.1">
    <property type="nucleotide sequence ID" value="NC_004547.2"/>
</dbReference>
<dbReference type="SMR" id="Q59418"/>
<dbReference type="STRING" id="218491.ECA2426"/>
<dbReference type="CAZy" id="PL22">
    <property type="family name" value="Polysaccharide Lyase Family 22"/>
</dbReference>
<dbReference type="DNASU" id="2883542"/>
<dbReference type="GeneID" id="57208858"/>
<dbReference type="KEGG" id="eca:ECA2426"/>
<dbReference type="PATRIC" id="fig|218491.5.peg.2457"/>
<dbReference type="eggNOG" id="COG0823">
    <property type="taxonomic scope" value="Bacteria"/>
</dbReference>
<dbReference type="HOGENOM" id="CLU_057268_0_0_6"/>
<dbReference type="OrthoDB" id="8432779at2"/>
<dbReference type="UniPathway" id="UPA00545">
    <property type="reaction ID" value="UER00825"/>
</dbReference>
<dbReference type="Proteomes" id="UP000007966">
    <property type="component" value="Chromosome"/>
</dbReference>
<dbReference type="GO" id="GO:0042597">
    <property type="term" value="C:periplasmic space"/>
    <property type="evidence" value="ECO:0007669"/>
    <property type="project" value="UniProtKB-SubCell"/>
</dbReference>
<dbReference type="GO" id="GO:0047487">
    <property type="term" value="F:oligogalacturonide lyase activity"/>
    <property type="evidence" value="ECO:0007669"/>
    <property type="project" value="UniProtKB-EC"/>
</dbReference>
<dbReference type="GO" id="GO:0045490">
    <property type="term" value="P:pectin catabolic process"/>
    <property type="evidence" value="ECO:0007669"/>
    <property type="project" value="UniProtKB-UniPathway"/>
</dbReference>
<dbReference type="Gene3D" id="2.130.10.10">
    <property type="entry name" value="YVTN repeat-like/Quinoprotein amine dehydrogenase"/>
    <property type="match status" value="1"/>
</dbReference>
<dbReference type="InterPro" id="IPR027946">
    <property type="entry name" value="Ogl_dom"/>
</dbReference>
<dbReference type="InterPro" id="IPR015943">
    <property type="entry name" value="WD40/YVTN_repeat-like_dom_sf"/>
</dbReference>
<dbReference type="PANTHER" id="PTHR36842:SF1">
    <property type="entry name" value="PROTEIN TOLB"/>
    <property type="match status" value="1"/>
</dbReference>
<dbReference type="PANTHER" id="PTHR36842">
    <property type="entry name" value="PROTEIN TOLB HOMOLOG"/>
    <property type="match status" value="1"/>
</dbReference>
<dbReference type="Pfam" id="PF14583">
    <property type="entry name" value="Pectate_lyase22"/>
    <property type="match status" value="1"/>
</dbReference>
<dbReference type="SUPFAM" id="SSF82171">
    <property type="entry name" value="DPP6 N-terminal domain-like"/>
    <property type="match status" value="1"/>
</dbReference>
<protein>
    <recommendedName>
        <fullName>Oligogalacturonide lyase</fullName>
        <ecNumber>4.2.2.6</ecNumber>
    </recommendedName>
</protein>
<gene>
    <name type="primary">ogl</name>
    <name type="ordered locus">ECA2426</name>
</gene>
<reference key="1">
    <citation type="submission" date="1994-02" db="EMBL/GenBank/DDBJ databases">
        <authorList>
            <person name="Weber J."/>
            <person name="Olsen O."/>
        </authorList>
    </citation>
    <scope>NUCLEOTIDE SEQUENCE [GENOMIC DNA]</scope>
    <source>
        <strain>C17</strain>
    </source>
</reference>
<reference key="2">
    <citation type="journal article" date="2004" name="Proc. Natl. Acad. Sci. U.S.A.">
        <title>Genome sequence of the enterobacterial phytopathogen Erwinia carotovora subsp. atroseptica and characterization of virulence factors.</title>
        <authorList>
            <person name="Bell K.S."/>
            <person name="Sebaihia M."/>
            <person name="Pritchard L."/>
            <person name="Holden M.T.G."/>
            <person name="Hyman L.J."/>
            <person name="Holeva M.C."/>
            <person name="Thomson N.R."/>
            <person name="Bentley S.D."/>
            <person name="Churcher L.J.C."/>
            <person name="Mungall K."/>
            <person name="Atkin R."/>
            <person name="Bason N."/>
            <person name="Brooks K."/>
            <person name="Chillingworth T."/>
            <person name="Clark K."/>
            <person name="Doggett J."/>
            <person name="Fraser A."/>
            <person name="Hance Z."/>
            <person name="Hauser H."/>
            <person name="Jagels K."/>
            <person name="Moule S."/>
            <person name="Norbertczak H."/>
            <person name="Ormond D."/>
            <person name="Price C."/>
            <person name="Quail M.A."/>
            <person name="Sanders M."/>
            <person name="Walker D."/>
            <person name="Whitehead S."/>
            <person name="Salmond G.P.C."/>
            <person name="Birch P.R.J."/>
            <person name="Parkhill J."/>
            <person name="Toth I.K."/>
        </authorList>
    </citation>
    <scope>NUCLEOTIDE SEQUENCE [LARGE SCALE GENOMIC DNA]</scope>
    <source>
        <strain>SCRI 1043 / ATCC BAA-672</strain>
    </source>
</reference>
<keyword id="KW-0456">Lyase</keyword>
<keyword id="KW-0574">Periplasm</keyword>
<keyword id="KW-1185">Reference proteome</keyword>
<name>OGL_PECAS</name>
<comment type="function">
    <text>Involved in degradation of pectin, which causes soft-rod disease in plants.</text>
</comment>
<comment type="catalytic activity">
    <reaction>
        <text>4-(4-deoxy-alpha-D-galact-4-enuronosyl)-D-galacturonate = 2 5-dehydro-4-deoxy-D-glucuronate</text>
        <dbReference type="Rhea" id="RHEA:20269"/>
        <dbReference type="ChEBI" id="CHEBI:17117"/>
        <dbReference type="ChEBI" id="CHEBI:60189"/>
        <dbReference type="EC" id="4.2.2.6"/>
    </reaction>
</comment>
<comment type="pathway">
    <text>Glycan metabolism; pectin degradation; 2-dehydro-3-deoxy-D-gluconate from pectin: step 3/5.</text>
</comment>
<comment type="subcellular location">
    <subcellularLocation>
        <location evidence="1">Periplasm</location>
    </subcellularLocation>
</comment>
<feature type="chain" id="PRO_0000058033" description="Oligogalacturonide lyase">
    <location>
        <begin position="1"/>
        <end position="388"/>
    </location>
</feature>
<feature type="sequence conflict" description="In Ref. 1; CAA54566." evidence="1" ref="1">
    <original>A</original>
    <variation>S</variation>
    <location>
        <position position="17"/>
    </location>
</feature>
<feature type="sequence conflict" description="In Ref. 1; CAA54566." evidence="1" ref="1">
    <original>N</original>
    <variation>S</variation>
    <location>
        <position position="71"/>
    </location>
</feature>
<feature type="sequence conflict" description="In Ref. 1; CAA54566." evidence="1" ref="1">
    <original>T</original>
    <variation>A</variation>
    <location>
        <position position="110"/>
    </location>
</feature>
<feature type="sequence conflict" description="In Ref. 1; CAA54566." evidence="1" ref="1">
    <original>G</original>
    <variation>S</variation>
    <location>
        <position position="141"/>
    </location>
</feature>
<feature type="sequence conflict" description="In Ref. 1; CAA54566." evidence="1" ref="1">
    <original>V</original>
    <variation>I</variation>
    <location>
        <position position="176"/>
    </location>
</feature>
<feature type="sequence conflict" description="In Ref. 1; CAA54566." evidence="1" ref="1">
    <original>A</original>
    <variation>V</variation>
    <location>
        <position position="304"/>
    </location>
</feature>
<feature type="sequence conflict" description="In Ref. 1; CAA54566." evidence="1" ref="1">
    <original>E</original>
    <variation>D</variation>
    <location>
        <position position="343"/>
    </location>
</feature>
<feature type="sequence conflict" description="In Ref. 1; CAA54566." evidence="1" ref="1">
    <original>N</original>
    <variation>H</variation>
    <location>
        <position position="388"/>
    </location>
</feature>
<proteinExistence type="predicted"/>